<keyword id="KW-0488">Methylation</keyword>
<keyword id="KW-0687">Ribonucleoprotein</keyword>
<keyword id="KW-0689">Ribosomal protein</keyword>
<keyword id="KW-0694">RNA-binding</keyword>
<keyword id="KW-0699">rRNA-binding</keyword>
<name>RL3_MARN8</name>
<sequence>MAIGVVGRKAGMTRIFTDEGQALPVTVIEVEPNRITQLKTLESDGYRAVQVTVGSRRSSRVNKAAAGHFAKAGVEAGRGVWEFRLADGEGEDLAAGGELTVSVFEDGQVVDAVGQSKGKGFQGGVKRWNFSMQDATHGNSLSHRAPGSIGQNQTPGKVFKGKKMAGQMGNAQVTVQNLKIVRVDAERNLLLVSGAVPGATGGDVVIKPAVKA</sequence>
<gene>
    <name evidence="1" type="primary">rplC</name>
    <name type="ordered locus">Maqu_0719</name>
</gene>
<feature type="chain" id="PRO_1000052074" description="Large ribosomal subunit protein uL3">
    <location>
        <begin position="1"/>
        <end position="212"/>
    </location>
</feature>
<feature type="modified residue" description="N5-methylglutamine" evidence="1">
    <location>
        <position position="153"/>
    </location>
</feature>
<protein>
    <recommendedName>
        <fullName evidence="1">Large ribosomal subunit protein uL3</fullName>
    </recommendedName>
    <alternativeName>
        <fullName evidence="2">50S ribosomal protein L3</fullName>
    </alternativeName>
</protein>
<proteinExistence type="inferred from homology"/>
<organism>
    <name type="scientific">Marinobacter nauticus (strain ATCC 700491 / DSM 11845 / VT8)</name>
    <name type="common">Marinobacter aquaeolei</name>
    <dbReference type="NCBI Taxonomy" id="351348"/>
    <lineage>
        <taxon>Bacteria</taxon>
        <taxon>Pseudomonadati</taxon>
        <taxon>Pseudomonadota</taxon>
        <taxon>Gammaproteobacteria</taxon>
        <taxon>Pseudomonadales</taxon>
        <taxon>Marinobacteraceae</taxon>
        <taxon>Marinobacter</taxon>
    </lineage>
</organism>
<reference key="1">
    <citation type="journal article" date="2011" name="Appl. Environ. Microbiol.">
        <title>Genomic potential of Marinobacter aquaeolei, a biogeochemical 'opportunitroph'.</title>
        <authorList>
            <person name="Singer E."/>
            <person name="Webb E.A."/>
            <person name="Nelson W.C."/>
            <person name="Heidelberg J.F."/>
            <person name="Ivanova N."/>
            <person name="Pati A."/>
            <person name="Edwards K.J."/>
        </authorList>
    </citation>
    <scope>NUCLEOTIDE SEQUENCE [LARGE SCALE GENOMIC DNA]</scope>
    <source>
        <strain>ATCC 700491 / DSM 11845 / VT8</strain>
    </source>
</reference>
<evidence type="ECO:0000255" key="1">
    <source>
        <dbReference type="HAMAP-Rule" id="MF_01325"/>
    </source>
</evidence>
<evidence type="ECO:0000305" key="2"/>
<dbReference type="EMBL" id="CP000514">
    <property type="protein sequence ID" value="ABM17816.1"/>
    <property type="molecule type" value="Genomic_DNA"/>
</dbReference>
<dbReference type="RefSeq" id="WP_011784246.1">
    <property type="nucleotide sequence ID" value="NC_008740.1"/>
</dbReference>
<dbReference type="SMR" id="A1TYJ7"/>
<dbReference type="STRING" id="351348.Maqu_0719"/>
<dbReference type="GeneID" id="31820094"/>
<dbReference type="KEGG" id="maq:Maqu_0719"/>
<dbReference type="eggNOG" id="COG0087">
    <property type="taxonomic scope" value="Bacteria"/>
</dbReference>
<dbReference type="HOGENOM" id="CLU_044142_4_1_6"/>
<dbReference type="OrthoDB" id="9806135at2"/>
<dbReference type="Proteomes" id="UP000000998">
    <property type="component" value="Chromosome"/>
</dbReference>
<dbReference type="GO" id="GO:0022625">
    <property type="term" value="C:cytosolic large ribosomal subunit"/>
    <property type="evidence" value="ECO:0007669"/>
    <property type="project" value="TreeGrafter"/>
</dbReference>
<dbReference type="GO" id="GO:0019843">
    <property type="term" value="F:rRNA binding"/>
    <property type="evidence" value="ECO:0007669"/>
    <property type="project" value="UniProtKB-UniRule"/>
</dbReference>
<dbReference type="GO" id="GO:0003735">
    <property type="term" value="F:structural constituent of ribosome"/>
    <property type="evidence" value="ECO:0007669"/>
    <property type="project" value="InterPro"/>
</dbReference>
<dbReference type="GO" id="GO:0006412">
    <property type="term" value="P:translation"/>
    <property type="evidence" value="ECO:0007669"/>
    <property type="project" value="UniProtKB-UniRule"/>
</dbReference>
<dbReference type="FunFam" id="2.40.30.10:FF:000004">
    <property type="entry name" value="50S ribosomal protein L3"/>
    <property type="match status" value="1"/>
</dbReference>
<dbReference type="FunFam" id="3.30.160.810:FF:000001">
    <property type="entry name" value="50S ribosomal protein L3"/>
    <property type="match status" value="1"/>
</dbReference>
<dbReference type="Gene3D" id="3.30.160.810">
    <property type="match status" value="1"/>
</dbReference>
<dbReference type="Gene3D" id="2.40.30.10">
    <property type="entry name" value="Translation factors"/>
    <property type="match status" value="1"/>
</dbReference>
<dbReference type="HAMAP" id="MF_01325_B">
    <property type="entry name" value="Ribosomal_uL3_B"/>
    <property type="match status" value="1"/>
</dbReference>
<dbReference type="InterPro" id="IPR000597">
    <property type="entry name" value="Ribosomal_uL3"/>
</dbReference>
<dbReference type="InterPro" id="IPR019927">
    <property type="entry name" value="Ribosomal_uL3_bac/org-type"/>
</dbReference>
<dbReference type="InterPro" id="IPR019926">
    <property type="entry name" value="Ribosomal_uL3_CS"/>
</dbReference>
<dbReference type="InterPro" id="IPR009000">
    <property type="entry name" value="Transl_B-barrel_sf"/>
</dbReference>
<dbReference type="NCBIfam" id="TIGR03625">
    <property type="entry name" value="L3_bact"/>
    <property type="match status" value="1"/>
</dbReference>
<dbReference type="PANTHER" id="PTHR11229">
    <property type="entry name" value="50S RIBOSOMAL PROTEIN L3"/>
    <property type="match status" value="1"/>
</dbReference>
<dbReference type="PANTHER" id="PTHR11229:SF16">
    <property type="entry name" value="LARGE RIBOSOMAL SUBUNIT PROTEIN UL3C"/>
    <property type="match status" value="1"/>
</dbReference>
<dbReference type="Pfam" id="PF00297">
    <property type="entry name" value="Ribosomal_L3"/>
    <property type="match status" value="1"/>
</dbReference>
<dbReference type="SUPFAM" id="SSF50447">
    <property type="entry name" value="Translation proteins"/>
    <property type="match status" value="1"/>
</dbReference>
<dbReference type="PROSITE" id="PS00474">
    <property type="entry name" value="RIBOSOMAL_L3"/>
    <property type="match status" value="1"/>
</dbReference>
<comment type="function">
    <text evidence="1">One of the primary rRNA binding proteins, it binds directly near the 3'-end of the 23S rRNA, where it nucleates assembly of the 50S subunit.</text>
</comment>
<comment type="subunit">
    <text evidence="1">Part of the 50S ribosomal subunit. Forms a cluster with proteins L14 and L19.</text>
</comment>
<comment type="PTM">
    <text evidence="1">Methylated by PrmB.</text>
</comment>
<comment type="similarity">
    <text evidence="1">Belongs to the universal ribosomal protein uL3 family.</text>
</comment>
<accession>A1TYJ7</accession>